<dbReference type="EC" id="3.5.1.13" evidence="1"/>
<dbReference type="EC" id="3.5.1.14" evidence="1"/>
<dbReference type="EC" id="3.5.1.4" evidence="1"/>
<dbReference type="EMBL" id="JX894244">
    <property type="protein sequence ID" value="AFY17041.1"/>
    <property type="molecule type" value="Genomic_DNA"/>
</dbReference>
<dbReference type="SMR" id="K9NBS6"/>
<dbReference type="STRING" id="1833.XU06_20045"/>
<dbReference type="GO" id="GO:0004040">
    <property type="term" value="F:amidase activity"/>
    <property type="evidence" value="ECO:0000314"/>
    <property type="project" value="UniProtKB"/>
</dbReference>
<dbReference type="GO" id="GO:0004046">
    <property type="term" value="F:aminoacylase activity"/>
    <property type="evidence" value="ECO:0000314"/>
    <property type="project" value="UniProtKB"/>
</dbReference>
<dbReference type="GO" id="GO:0047680">
    <property type="term" value="F:aryl-acylamidase activity"/>
    <property type="evidence" value="ECO:0000314"/>
    <property type="project" value="UniProtKB"/>
</dbReference>
<dbReference type="GO" id="GO:0043605">
    <property type="term" value="P:amide catabolic process"/>
    <property type="evidence" value="ECO:0000314"/>
    <property type="project" value="UniProtKB"/>
</dbReference>
<dbReference type="FunFam" id="3.90.1300.10:FF:000008">
    <property type="entry name" value="Amidase AmiC"/>
    <property type="match status" value="1"/>
</dbReference>
<dbReference type="Gene3D" id="3.90.1300.10">
    <property type="entry name" value="Amidase signature (AS) domain"/>
    <property type="match status" value="1"/>
</dbReference>
<dbReference type="InterPro" id="IPR000120">
    <property type="entry name" value="Amidase"/>
</dbReference>
<dbReference type="InterPro" id="IPR020556">
    <property type="entry name" value="Amidase_CS"/>
</dbReference>
<dbReference type="InterPro" id="IPR023631">
    <property type="entry name" value="Amidase_dom"/>
</dbReference>
<dbReference type="InterPro" id="IPR036928">
    <property type="entry name" value="AS_sf"/>
</dbReference>
<dbReference type="PANTHER" id="PTHR11895:SF7">
    <property type="entry name" value="GLUTAMYL-TRNA(GLN) AMIDOTRANSFERASE SUBUNIT A, MITOCHONDRIAL"/>
    <property type="match status" value="1"/>
</dbReference>
<dbReference type="PANTHER" id="PTHR11895">
    <property type="entry name" value="TRANSAMIDASE"/>
    <property type="match status" value="1"/>
</dbReference>
<dbReference type="Pfam" id="PF01425">
    <property type="entry name" value="Amidase"/>
    <property type="match status" value="1"/>
</dbReference>
<dbReference type="SUPFAM" id="SSF75304">
    <property type="entry name" value="Amidase signature (AS) enzymes"/>
    <property type="match status" value="1"/>
</dbReference>
<dbReference type="PROSITE" id="PS00571">
    <property type="entry name" value="AMIDASES"/>
    <property type="match status" value="1"/>
</dbReference>
<name>AAM_RHOER</name>
<sequence>MTEQNLHWLSATEMAASVASNNLSPNEIAEAMIQRVDAVNPSINAIVQFDREQVTRDAAELSRQQEAGEKLGPLHGVPFTIKDLTAVDGLPTTFGMKPMADNIATGNAVVVDRLRGAGGLFLGKTNTPESGYYGGTDNHLYGPTHNPWKLGNSAGGSSGGASAAVAAGLGPLAEGSDGAGSVRIPSALCGVVGLKPTTGVIPQTILAGRFYNWAYHGPITRTVADNALMLDIMAGPDNADPLSIERAETSYVEASKGDVKGLRVAWSPNLGLGHVDPEVLAVCLDALAAFEELGAQITEATPQWGNPSESMWSGIWVPGFASEYDLLDWENQRGEVDDYLIEIMHEAERLTGVDVGRADAFRGDMWDTWTTFMNDYDVLVSPTLASATFPLRQFAPSWLEGASLREQLLDWLFTYPYNMLNNPAITVPAGFTADGRPVGLQIAARHRRDALVLRTAANFEAVRPWADKKPADSLVVA</sequence>
<accession>K9NBS6</accession>
<comment type="function">
    <text evidence="1">Amidase with broad substrate specificity, catalyzing the hydrolysis of a wide range of N-substituted amides, and, to a lesser extent, the hydrolysis of non-substituted amides. Acid para-nitroanilides (4'-nitroacetanilide, Gly-pNA, Ala-pNA, Leu-pNA) are the best substrates for this enzyme. N-substituted acrylamides (isopropyl acrylamide, N,N-dimethyl-aminopropyl acrylamide, and methylene-bis-acrylamide), N-acetyl derivatives of glycine, alanine and leucine, and aliphatic amides (acetamide, acrylamide, isobutyramide, n-butyramide, and valeramide) can also be used as substrates but with less efficiency.</text>
</comment>
<comment type="catalytic activity">
    <reaction evidence="1">
        <text>a monocarboxylic acid amide + H2O = a monocarboxylate + NH4(+)</text>
        <dbReference type="Rhea" id="RHEA:12020"/>
        <dbReference type="ChEBI" id="CHEBI:15377"/>
        <dbReference type="ChEBI" id="CHEBI:28938"/>
        <dbReference type="ChEBI" id="CHEBI:35757"/>
        <dbReference type="ChEBI" id="CHEBI:83628"/>
        <dbReference type="EC" id="3.5.1.4"/>
    </reaction>
</comment>
<comment type="catalytic activity">
    <reaction evidence="1 2">
        <text>an anilide + H2O = aniline + a carboxylate + H(+)</text>
        <dbReference type="Rhea" id="RHEA:20297"/>
        <dbReference type="ChEBI" id="CHEBI:13248"/>
        <dbReference type="ChEBI" id="CHEBI:15377"/>
        <dbReference type="ChEBI" id="CHEBI:15378"/>
        <dbReference type="ChEBI" id="CHEBI:17296"/>
        <dbReference type="ChEBI" id="CHEBI:29067"/>
        <dbReference type="EC" id="3.5.1.13"/>
    </reaction>
</comment>
<comment type="catalytic activity">
    <reaction evidence="1">
        <text>an N-acyl-L-amino acid + H2O = an L-alpha-amino acid + a carboxylate</text>
        <dbReference type="Rhea" id="RHEA:15565"/>
        <dbReference type="ChEBI" id="CHEBI:15377"/>
        <dbReference type="ChEBI" id="CHEBI:29067"/>
        <dbReference type="ChEBI" id="CHEBI:59869"/>
        <dbReference type="ChEBI" id="CHEBI:59874"/>
        <dbReference type="EC" id="3.5.1.14"/>
    </reaction>
</comment>
<comment type="catalytic activity">
    <reaction>
        <text>an N-acetyl-L-cysteine-S-conjugate + H2O = an S-substituted L-cysteine + acetate</text>
        <dbReference type="Rhea" id="RHEA:36855"/>
        <dbReference type="ChEBI" id="CHEBI:15377"/>
        <dbReference type="ChEBI" id="CHEBI:30089"/>
        <dbReference type="ChEBI" id="CHEBI:58717"/>
        <dbReference type="ChEBI" id="CHEBI:58718"/>
        <dbReference type="EC" id="3.5.1.14"/>
    </reaction>
</comment>
<comment type="activity regulation">
    <text evidence="1">Amidase activity is completely suppressed by inhibitors of serine proteases (phenylmethylsulfonyl fluoride and diisopropyl fluorophosphate), partially inhibited by copper and mercury ions, but is not affected by inhibitors of aliphatic amidases (acetaldehyde and nitrophenyl disulfides) or by EDTA.</text>
</comment>
<comment type="biophysicochemical properties">
    <kinetics>
        <KM evidence="1">0.25 mM for Gly-para-nitroanilide</KM>
        <KM evidence="1">0.48 mM for Leu-para-nitroanilide</KM>
        <KM evidence="1">0.55 mM for Ala-para-nitroanilide</KM>
        <Vmax evidence="1">104.5 umol/min/mg enzyme with Gly-para-nitroanilide as substrate</Vmax>
        <Vmax evidence="1">17.0 umol/min/mg enzyme with Leu-para-nitroanilide as substrate</Vmax>
        <Vmax evidence="1">35.5 umol/min/mg enzyme with Ala-para-nitroanilide as substrate</Vmax>
    </kinetics>
    <phDependence>
        <text evidence="1">Optimum pH is 7-8. At low pH values the enzyme is rapidly inactivated, whereas in basic medium inactivation is rather slow.</text>
    </phDependence>
    <temperatureDependence>
        <text evidence="1">Optimum temperature is 55 degrees Celsius. Shows a drastic decrease in activity above the optimal temperature. Is stable for 15 hours at 22 degrees Celsius and for 0.5 hour at 45 degrees Celsius.</text>
    </temperatureDependence>
</comment>
<comment type="induction">
    <text evidence="1">By acetanilide.</text>
</comment>
<comment type="similarity">
    <text evidence="5">Belongs to the amidase family.</text>
</comment>
<protein>
    <recommendedName>
        <fullName evidence="3">Acylamidase</fullName>
        <ecNumber evidence="1">3.5.1.13</ecNumber>
        <ecNumber evidence="1">3.5.1.14</ecNumber>
        <ecNumber evidence="1">3.5.1.4</ecNumber>
    </recommendedName>
</protein>
<reference key="1">
    <citation type="journal article" date="2013" name="Russ. J. Genet.">
        <title>Cloning of new acylamidase gene from Rhodococcus erythropolis and its expression in Escherichia coli.</title>
        <authorList>
            <person name="Lavrov K.V."/>
            <person name="Yanenko A.S."/>
        </authorList>
    </citation>
    <scope>NUCLEOTIDE SEQUENCE [GENOMIC DNA]</scope>
    <scope>CATALYTIC ACTIVITY</scope>
    <source>
        <strain>TA37</strain>
    </source>
</reference>
<reference key="2">
    <citation type="journal article" date="2010" name="Biochemistry (Mosc.)">
        <title>A new acylamidase from Rhodococcus erythropolis TA37 can hydrolyze N-substituted amides.</title>
        <authorList>
            <person name="Lavrov K.V."/>
            <person name="Zalunin I.A."/>
            <person name="Kotlova E.K."/>
            <person name="Yanenko A.S."/>
        </authorList>
    </citation>
    <scope>PROTEIN SEQUENCE OF 2-13; 125-136 AND 455-466</scope>
    <scope>FUNCTION</scope>
    <scope>CATALYTIC ACTIVITY</scope>
    <scope>SUBSTRATE SPECIFICITY</scope>
    <scope>ACTIVITY REGULATION</scope>
    <scope>BIOPHYSICOCHEMICAL PROPERTIES</scope>
    <scope>INDUCTION</scope>
    <source>
        <strain>TA37</strain>
    </source>
</reference>
<keyword id="KW-0903">Direct protein sequencing</keyword>
<keyword id="KW-0378">Hydrolase</keyword>
<evidence type="ECO:0000269" key="1">
    <source>
    </source>
</evidence>
<evidence type="ECO:0000269" key="2">
    <source ref="1"/>
</evidence>
<evidence type="ECO:0000303" key="3">
    <source>
    </source>
</evidence>
<evidence type="ECO:0000303" key="4">
    <source ref="1"/>
</evidence>
<evidence type="ECO:0000305" key="5"/>
<evidence type="ECO:0000305" key="6">
    <source ref="1"/>
</evidence>
<gene>
    <name evidence="4" type="primary">aam</name>
</gene>
<feature type="initiator methionine" description="Removed" evidence="1">
    <location>
        <position position="1"/>
    </location>
</feature>
<feature type="chain" id="PRO_0000424899" description="Acylamidase">
    <location>
        <begin position="2"/>
        <end position="477"/>
    </location>
</feature>
<feature type="active site" description="Charge relay system" evidence="6">
    <location>
        <position position="82"/>
    </location>
</feature>
<feature type="active site" description="Charge relay system" evidence="6">
    <location>
        <position position="157"/>
    </location>
</feature>
<feature type="active site" description="Acyl-ester intermediate" evidence="6">
    <location>
        <position position="181"/>
    </location>
</feature>
<proteinExistence type="evidence at protein level"/>
<organism>
    <name type="scientific">Rhodococcus erythropolis</name>
    <name type="common">Arthrobacter picolinophilus</name>
    <dbReference type="NCBI Taxonomy" id="1833"/>
    <lineage>
        <taxon>Bacteria</taxon>
        <taxon>Bacillati</taxon>
        <taxon>Actinomycetota</taxon>
        <taxon>Actinomycetes</taxon>
        <taxon>Mycobacteriales</taxon>
        <taxon>Nocardiaceae</taxon>
        <taxon>Rhodococcus</taxon>
        <taxon>Rhodococcus erythropolis group</taxon>
    </lineage>
</organism>